<comment type="function">
    <text evidence="1">Catalyzes the hydroxylation of the N(6)-(4-aminobutyl)-L-lysine intermediate to form hypusine, an essential post-translational modification only found in mature eIF-5A factor.</text>
</comment>
<comment type="catalytic activity">
    <reaction evidence="1">
        <text>[eIF5A protein]-deoxyhypusine + AH2 + O2 = [eIF5A protein]-hypusine + A + H2O</text>
        <dbReference type="Rhea" id="RHEA:14101"/>
        <dbReference type="Rhea" id="RHEA-COMP:10144"/>
        <dbReference type="Rhea" id="RHEA-COMP:12592"/>
        <dbReference type="ChEBI" id="CHEBI:13193"/>
        <dbReference type="ChEBI" id="CHEBI:15377"/>
        <dbReference type="ChEBI" id="CHEBI:15379"/>
        <dbReference type="ChEBI" id="CHEBI:17499"/>
        <dbReference type="ChEBI" id="CHEBI:82657"/>
        <dbReference type="ChEBI" id="CHEBI:91175"/>
        <dbReference type="EC" id="1.14.99.29"/>
    </reaction>
</comment>
<comment type="cofactor">
    <cofactor evidence="1">
        <name>Fe(2+)</name>
        <dbReference type="ChEBI" id="CHEBI:29033"/>
    </cofactor>
    <text evidence="1">Binds 2 Fe(2+) ions per subunit.</text>
</comment>
<comment type="pathway">
    <text evidence="1">Protein modification; eIF5A hypusination.</text>
</comment>
<comment type="subcellular location">
    <subcellularLocation>
        <location evidence="1">Cytoplasm</location>
    </subcellularLocation>
    <subcellularLocation>
        <location evidence="1">Nucleus</location>
    </subcellularLocation>
</comment>
<comment type="similarity">
    <text evidence="1">Belongs to the deoxyhypusine hydroxylase family.</text>
</comment>
<evidence type="ECO:0000255" key="1">
    <source>
        <dbReference type="HAMAP-Rule" id="MF_03101"/>
    </source>
</evidence>
<organism>
    <name type="scientific">Eremothecium gossypii (strain ATCC 10895 / CBS 109.51 / FGSC 9923 / NRRL Y-1056)</name>
    <name type="common">Yeast</name>
    <name type="synonym">Ashbya gossypii</name>
    <dbReference type="NCBI Taxonomy" id="284811"/>
    <lineage>
        <taxon>Eukaryota</taxon>
        <taxon>Fungi</taxon>
        <taxon>Dikarya</taxon>
        <taxon>Ascomycota</taxon>
        <taxon>Saccharomycotina</taxon>
        <taxon>Saccharomycetes</taxon>
        <taxon>Saccharomycetales</taxon>
        <taxon>Saccharomycetaceae</taxon>
        <taxon>Eremothecium</taxon>
    </lineage>
</organism>
<dbReference type="EC" id="1.14.99.29" evidence="1"/>
<dbReference type="EMBL" id="AE016819">
    <property type="protein sequence ID" value="AAS53797.2"/>
    <property type="molecule type" value="Genomic_DNA"/>
</dbReference>
<dbReference type="RefSeq" id="NP_985973.2">
    <property type="nucleotide sequence ID" value="NM_211328.2"/>
</dbReference>
<dbReference type="SMR" id="Q752Z8"/>
<dbReference type="FunCoup" id="Q752Z8">
    <property type="interactions" value="948"/>
</dbReference>
<dbReference type="STRING" id="284811.Q752Z8"/>
<dbReference type="EnsemblFungi" id="AAS53797">
    <property type="protein sequence ID" value="AAS53797"/>
    <property type="gene ID" value="AGOS_AFR426C"/>
</dbReference>
<dbReference type="GeneID" id="4622246"/>
<dbReference type="KEGG" id="ago:AGOS_AFR426C"/>
<dbReference type="eggNOG" id="KOG0567">
    <property type="taxonomic scope" value="Eukaryota"/>
</dbReference>
<dbReference type="HOGENOM" id="CLU_053974_0_0_1"/>
<dbReference type="InParanoid" id="Q752Z8"/>
<dbReference type="OMA" id="LQEPCSI"/>
<dbReference type="OrthoDB" id="421002at2759"/>
<dbReference type="UniPathway" id="UPA00354"/>
<dbReference type="Proteomes" id="UP000000591">
    <property type="component" value="Chromosome VI"/>
</dbReference>
<dbReference type="GO" id="GO:0005737">
    <property type="term" value="C:cytoplasm"/>
    <property type="evidence" value="ECO:0007669"/>
    <property type="project" value="UniProtKB-SubCell"/>
</dbReference>
<dbReference type="GO" id="GO:0005634">
    <property type="term" value="C:nucleus"/>
    <property type="evidence" value="ECO:0007669"/>
    <property type="project" value="UniProtKB-SubCell"/>
</dbReference>
<dbReference type="GO" id="GO:0019135">
    <property type="term" value="F:deoxyhypusine monooxygenase activity"/>
    <property type="evidence" value="ECO:0000318"/>
    <property type="project" value="GO_Central"/>
</dbReference>
<dbReference type="GO" id="GO:0046872">
    <property type="term" value="F:metal ion binding"/>
    <property type="evidence" value="ECO:0007669"/>
    <property type="project" value="UniProtKB-KW"/>
</dbReference>
<dbReference type="GO" id="GO:0000226">
    <property type="term" value="P:microtubule cytoskeleton organization"/>
    <property type="evidence" value="ECO:0007669"/>
    <property type="project" value="EnsemblFungi"/>
</dbReference>
<dbReference type="FunFam" id="1.25.10.10:FF:000099">
    <property type="entry name" value="Deoxyhypusine hydroxylase"/>
    <property type="match status" value="1"/>
</dbReference>
<dbReference type="Gene3D" id="1.25.10.10">
    <property type="entry name" value="Leucine-rich Repeat Variant"/>
    <property type="match status" value="2"/>
</dbReference>
<dbReference type="HAMAP" id="MF_03101">
    <property type="entry name" value="Deoxyhypusine_hydroxylase"/>
    <property type="match status" value="1"/>
</dbReference>
<dbReference type="InterPro" id="IPR011989">
    <property type="entry name" value="ARM-like"/>
</dbReference>
<dbReference type="InterPro" id="IPR016024">
    <property type="entry name" value="ARM-type_fold"/>
</dbReference>
<dbReference type="InterPro" id="IPR027517">
    <property type="entry name" value="Deoxyhypusine_hydroxylase"/>
</dbReference>
<dbReference type="InterPro" id="IPR004155">
    <property type="entry name" value="PBS_lyase_HEAT"/>
</dbReference>
<dbReference type="PANTHER" id="PTHR12697:SF5">
    <property type="entry name" value="DEOXYHYPUSINE HYDROXYLASE"/>
    <property type="match status" value="1"/>
</dbReference>
<dbReference type="PANTHER" id="PTHR12697">
    <property type="entry name" value="PBS LYASE HEAT-LIKE PROTEIN"/>
    <property type="match status" value="1"/>
</dbReference>
<dbReference type="Pfam" id="PF13646">
    <property type="entry name" value="HEAT_2"/>
    <property type="match status" value="2"/>
</dbReference>
<dbReference type="SMART" id="SM00567">
    <property type="entry name" value="EZ_HEAT"/>
    <property type="match status" value="5"/>
</dbReference>
<dbReference type="SUPFAM" id="SSF48371">
    <property type="entry name" value="ARM repeat"/>
    <property type="match status" value="1"/>
</dbReference>
<name>DOHH_EREGS</name>
<keyword id="KW-0963">Cytoplasm</keyword>
<keyword id="KW-0386">Hypusine biosynthesis</keyword>
<keyword id="KW-0408">Iron</keyword>
<keyword id="KW-0479">Metal-binding</keyword>
<keyword id="KW-0503">Monooxygenase</keyword>
<keyword id="KW-0539">Nucleus</keyword>
<keyword id="KW-0560">Oxidoreductase</keyword>
<keyword id="KW-1185">Reference proteome</keyword>
<keyword id="KW-0677">Repeat</keyword>
<protein>
    <recommendedName>
        <fullName evidence="1">Deoxyhypusine hydroxylase</fullName>
        <shortName evidence="1">DOHH</shortName>
        <ecNumber evidence="1">1.14.99.29</ecNumber>
    </recommendedName>
    <alternativeName>
        <fullName evidence="1">Deoxyhypusine dioxygenase</fullName>
    </alternativeName>
    <alternativeName>
        <fullName evidence="1">Deoxyhypusine monooxygenase</fullName>
    </alternativeName>
</protein>
<sequence length="322" mass="36056">MSTEFEKKMEEHIDSCSLEQLRDILVNKNGDAKLTNRFRALFNLKCVAEEFAQRPEEAQRAVEYICEAFADSSELLKHEVAYVLGQTGNLACAATLREVMLDHAQQCMVRHEASEALGALGDAASLGALERSRREDPSEEVRQTSELAIERIRWQASGAAATEQLQQSLYSSVDPAPPLSLEKDYDVPQLQALLNDQRAPLFERYRAMFRLRDIGSDEACYALASGFDDPSALFKHEIAYVFGQIGNPCVVPHLQEVLKREHEAPMVRHEAAEALGSIATDDVLPVLKRHLQDKDEVVRESAAIALDMYDYENSNELEYAPA</sequence>
<proteinExistence type="inferred from homology"/>
<feature type="chain" id="PRO_0000283653" description="Deoxyhypusine hydroxylase">
    <location>
        <begin position="1"/>
        <end position="322"/>
    </location>
</feature>
<feature type="repeat" description="HEAT-like PBS-type 1">
    <location>
        <begin position="76"/>
        <end position="102"/>
    </location>
</feature>
<feature type="repeat" description="HEAT-like PBS-type 2">
    <location>
        <begin position="109"/>
        <end position="135"/>
    </location>
</feature>
<feature type="repeat" description="HEAT-like PBS-type 3">
    <location>
        <begin position="234"/>
        <end position="260"/>
    </location>
</feature>
<feature type="repeat" description="HEAT-like PBS-type 4">
    <location>
        <begin position="267"/>
        <end position="293"/>
    </location>
</feature>
<feature type="binding site" evidence="1">
    <location>
        <position position="78"/>
    </location>
    <ligand>
        <name>Fe cation</name>
        <dbReference type="ChEBI" id="CHEBI:24875"/>
        <label>1</label>
    </ligand>
</feature>
<feature type="binding site" evidence="1">
    <location>
        <position position="79"/>
    </location>
    <ligand>
        <name>Fe cation</name>
        <dbReference type="ChEBI" id="CHEBI:24875"/>
        <label>1</label>
    </ligand>
</feature>
<feature type="binding site" evidence="1">
    <location>
        <position position="111"/>
    </location>
    <ligand>
        <name>Fe cation</name>
        <dbReference type="ChEBI" id="CHEBI:24875"/>
        <label>1</label>
    </ligand>
</feature>
<feature type="binding site" evidence="1">
    <location>
        <position position="112"/>
    </location>
    <ligand>
        <name>Fe cation</name>
        <dbReference type="ChEBI" id="CHEBI:24875"/>
        <label>1</label>
    </ligand>
</feature>
<feature type="binding site" evidence="1">
    <location>
        <position position="236"/>
    </location>
    <ligand>
        <name>Fe cation</name>
        <dbReference type="ChEBI" id="CHEBI:24875"/>
        <label>2</label>
    </ligand>
</feature>
<feature type="binding site" evidence="1">
    <location>
        <position position="237"/>
    </location>
    <ligand>
        <name>Fe cation</name>
        <dbReference type="ChEBI" id="CHEBI:24875"/>
        <label>2</label>
    </ligand>
</feature>
<feature type="binding site" evidence="1">
    <location>
        <position position="269"/>
    </location>
    <ligand>
        <name>Fe cation</name>
        <dbReference type="ChEBI" id="CHEBI:24875"/>
        <label>2</label>
    </ligand>
</feature>
<feature type="binding site" evidence="1">
    <location>
        <position position="270"/>
    </location>
    <ligand>
        <name>Fe cation</name>
        <dbReference type="ChEBI" id="CHEBI:24875"/>
        <label>2</label>
    </ligand>
</feature>
<gene>
    <name evidence="1" type="primary">LIA1</name>
    <name type="ordered locus">AFR426C</name>
</gene>
<reference key="1">
    <citation type="journal article" date="2004" name="Science">
        <title>The Ashbya gossypii genome as a tool for mapping the ancient Saccharomyces cerevisiae genome.</title>
        <authorList>
            <person name="Dietrich F.S."/>
            <person name="Voegeli S."/>
            <person name="Brachat S."/>
            <person name="Lerch A."/>
            <person name="Gates K."/>
            <person name="Steiner S."/>
            <person name="Mohr C."/>
            <person name="Poehlmann R."/>
            <person name="Luedi P."/>
            <person name="Choi S."/>
            <person name="Wing R.A."/>
            <person name="Flavier A."/>
            <person name="Gaffney T.D."/>
            <person name="Philippsen P."/>
        </authorList>
    </citation>
    <scope>NUCLEOTIDE SEQUENCE [LARGE SCALE GENOMIC DNA]</scope>
    <source>
        <strain>ATCC 10895 / CBS 109.51 / FGSC 9923 / NRRL Y-1056</strain>
    </source>
</reference>
<reference key="2">
    <citation type="journal article" date="2013" name="G3 (Bethesda)">
        <title>Genomes of Ashbya fungi isolated from insects reveal four mating-type loci, numerous translocations, lack of transposons, and distinct gene duplications.</title>
        <authorList>
            <person name="Dietrich F.S."/>
            <person name="Voegeli S."/>
            <person name="Kuo S."/>
            <person name="Philippsen P."/>
        </authorList>
    </citation>
    <scope>GENOME REANNOTATION</scope>
    <scope>SEQUENCE REVISION TO 178</scope>
    <source>
        <strain>ATCC 10895 / CBS 109.51 / FGSC 9923 / NRRL Y-1056</strain>
    </source>
</reference>
<accession>Q752Z8</accession>